<feature type="chain" id="PRO_0000356375" description="Large ribosomal subunit protein bL33">
    <location>
        <begin position="1"/>
        <end position="52"/>
    </location>
</feature>
<proteinExistence type="inferred from homology"/>
<organism>
    <name type="scientific">Anaeromyxobacter sp. (strain K)</name>
    <dbReference type="NCBI Taxonomy" id="447217"/>
    <lineage>
        <taxon>Bacteria</taxon>
        <taxon>Pseudomonadati</taxon>
        <taxon>Myxococcota</taxon>
        <taxon>Myxococcia</taxon>
        <taxon>Myxococcales</taxon>
        <taxon>Cystobacterineae</taxon>
        <taxon>Anaeromyxobacteraceae</taxon>
        <taxon>Anaeromyxobacter</taxon>
    </lineage>
</organism>
<comment type="similarity">
    <text evidence="1">Belongs to the bacterial ribosomal protein bL33 family.</text>
</comment>
<name>RL33_ANASK</name>
<gene>
    <name evidence="1" type="primary">rpmG</name>
    <name type="ordered locus">AnaeK_2278</name>
</gene>
<dbReference type="EMBL" id="CP001131">
    <property type="protein sequence ID" value="ACG73505.1"/>
    <property type="molecule type" value="Genomic_DNA"/>
</dbReference>
<dbReference type="RefSeq" id="WP_011420641.1">
    <property type="nucleotide sequence ID" value="NC_011145.1"/>
</dbReference>
<dbReference type="SMR" id="B4UDT9"/>
<dbReference type="KEGG" id="ank:AnaeK_2278"/>
<dbReference type="HOGENOM" id="CLU_190949_0_2_7"/>
<dbReference type="Proteomes" id="UP000001871">
    <property type="component" value="Chromosome"/>
</dbReference>
<dbReference type="GO" id="GO:0005737">
    <property type="term" value="C:cytoplasm"/>
    <property type="evidence" value="ECO:0007669"/>
    <property type="project" value="UniProtKB-ARBA"/>
</dbReference>
<dbReference type="GO" id="GO:1990904">
    <property type="term" value="C:ribonucleoprotein complex"/>
    <property type="evidence" value="ECO:0007669"/>
    <property type="project" value="UniProtKB-KW"/>
</dbReference>
<dbReference type="GO" id="GO:0005840">
    <property type="term" value="C:ribosome"/>
    <property type="evidence" value="ECO:0007669"/>
    <property type="project" value="UniProtKB-KW"/>
</dbReference>
<dbReference type="GO" id="GO:0003735">
    <property type="term" value="F:structural constituent of ribosome"/>
    <property type="evidence" value="ECO:0007669"/>
    <property type="project" value="InterPro"/>
</dbReference>
<dbReference type="GO" id="GO:0006412">
    <property type="term" value="P:translation"/>
    <property type="evidence" value="ECO:0007669"/>
    <property type="project" value="UniProtKB-UniRule"/>
</dbReference>
<dbReference type="Gene3D" id="2.20.28.120">
    <property type="entry name" value="Ribosomal protein L33"/>
    <property type="match status" value="1"/>
</dbReference>
<dbReference type="HAMAP" id="MF_00294">
    <property type="entry name" value="Ribosomal_bL33"/>
    <property type="match status" value="1"/>
</dbReference>
<dbReference type="InterPro" id="IPR001705">
    <property type="entry name" value="Ribosomal_bL33"/>
</dbReference>
<dbReference type="InterPro" id="IPR018264">
    <property type="entry name" value="Ribosomal_bL33_CS"/>
</dbReference>
<dbReference type="InterPro" id="IPR038584">
    <property type="entry name" value="Ribosomal_bL33_sf"/>
</dbReference>
<dbReference type="InterPro" id="IPR011332">
    <property type="entry name" value="Ribosomal_zn-bd"/>
</dbReference>
<dbReference type="NCBIfam" id="NF001764">
    <property type="entry name" value="PRK00504.1"/>
    <property type="match status" value="1"/>
</dbReference>
<dbReference type="NCBIfam" id="NF001860">
    <property type="entry name" value="PRK00595.1"/>
    <property type="match status" value="1"/>
</dbReference>
<dbReference type="NCBIfam" id="TIGR01023">
    <property type="entry name" value="rpmG_bact"/>
    <property type="match status" value="1"/>
</dbReference>
<dbReference type="PANTHER" id="PTHR43168">
    <property type="entry name" value="50S RIBOSOMAL PROTEIN L33, CHLOROPLASTIC"/>
    <property type="match status" value="1"/>
</dbReference>
<dbReference type="PANTHER" id="PTHR43168:SF2">
    <property type="entry name" value="LARGE RIBOSOMAL SUBUNIT PROTEIN BL33C"/>
    <property type="match status" value="1"/>
</dbReference>
<dbReference type="Pfam" id="PF00471">
    <property type="entry name" value="Ribosomal_L33"/>
    <property type="match status" value="1"/>
</dbReference>
<dbReference type="SUPFAM" id="SSF57829">
    <property type="entry name" value="Zn-binding ribosomal proteins"/>
    <property type="match status" value="1"/>
</dbReference>
<dbReference type="PROSITE" id="PS00582">
    <property type="entry name" value="RIBOSOMAL_L33"/>
    <property type="match status" value="1"/>
</dbReference>
<accession>B4UDT9</accession>
<evidence type="ECO:0000255" key="1">
    <source>
        <dbReference type="HAMAP-Rule" id="MF_00294"/>
    </source>
</evidence>
<evidence type="ECO:0000305" key="2"/>
<keyword id="KW-0687">Ribonucleoprotein</keyword>
<keyword id="KW-0689">Ribosomal protein</keyword>
<reference key="1">
    <citation type="submission" date="2008-08" db="EMBL/GenBank/DDBJ databases">
        <title>Complete sequence of Anaeromyxobacter sp. K.</title>
        <authorList>
            <consortium name="US DOE Joint Genome Institute"/>
            <person name="Lucas S."/>
            <person name="Copeland A."/>
            <person name="Lapidus A."/>
            <person name="Glavina del Rio T."/>
            <person name="Dalin E."/>
            <person name="Tice H."/>
            <person name="Bruce D."/>
            <person name="Goodwin L."/>
            <person name="Pitluck S."/>
            <person name="Saunders E."/>
            <person name="Brettin T."/>
            <person name="Detter J.C."/>
            <person name="Han C."/>
            <person name="Larimer F."/>
            <person name="Land M."/>
            <person name="Hauser L."/>
            <person name="Kyrpides N."/>
            <person name="Ovchinnikiva G."/>
            <person name="Beliaev A."/>
        </authorList>
    </citation>
    <scope>NUCLEOTIDE SEQUENCE [LARGE SCALE GENOMIC DNA]</scope>
    <source>
        <strain>K</strain>
    </source>
</reference>
<sequence length="52" mass="6172">MAGNRSIITLECKTCKERNYTTTKNKKKTQDKLTLSKYCPRCRKHVEHKETK</sequence>
<protein>
    <recommendedName>
        <fullName evidence="1">Large ribosomal subunit protein bL33</fullName>
    </recommendedName>
    <alternativeName>
        <fullName evidence="2">50S ribosomal protein L33</fullName>
    </alternativeName>
</protein>